<sequence>MLGRSGYRALPLGDFDRFQQSSFGFLGSQKGCLSPERGGVGTGADVPQSWPSCLCHGLISFLGFLLLLVTFPISGWFALKIVPTYERMIVFRLGRIRTPQGPGMVLLLPFIDSFQRVDLRTRAFNVPPCKLASKDGAVLSVGADVQFRIWDPVLSVMTVKDLNTATRMTAQNAMTKALLKRPLREIQMEKLKISDQLLLEINDVTRAWGLEVDRVELAVEAVLQPPQDSPAGPNLDSTLQQLALHFLGGSMNSMAGGAPSPGPADTVEMVSEVEPPAPQVGARSSPKQPLAEGLLTALQPFLSEALVSQVGACYQFNVVLPSGTQSAYFLDLTTGRGRVGHGVPDGIPDVVVEMAEADLRALLCRELRPLGAYMSGRLKVKGDLAMAMKLEAVLRALK</sequence>
<keyword id="KW-0025">Alternative splicing</keyword>
<keyword id="KW-1003">Cell membrane</keyword>
<keyword id="KW-0968">Cytoplasmic vesicle</keyword>
<keyword id="KW-0967">Endosome</keyword>
<keyword id="KW-0445">Lipid transport</keyword>
<keyword id="KW-0472">Membrane</keyword>
<keyword id="KW-0597">Phosphoprotein</keyword>
<keyword id="KW-1267">Proteomics identification</keyword>
<keyword id="KW-1185">Reference proteome</keyword>
<keyword id="KW-0735">Signal-anchor</keyword>
<keyword id="KW-0812">Transmembrane</keyword>
<keyword id="KW-1133">Transmembrane helix</keyword>
<keyword id="KW-0813">Transport</keyword>
<feature type="chain" id="PRO_0000094029" description="Stomatin-like protein 1">
    <location>
        <begin position="1"/>
        <end position="398"/>
    </location>
</feature>
<feature type="transmembrane region" description="Helical; Signal-anchor for type III membrane protein" evidence="2">
    <location>
        <begin position="58"/>
        <end position="78"/>
    </location>
</feature>
<feature type="topological domain" description="Cytoplasmic" evidence="2">
    <location>
        <begin position="79"/>
        <end position="398"/>
    </location>
</feature>
<feature type="domain" description="SCP2">
    <location>
        <begin position="287"/>
        <end position="398"/>
    </location>
</feature>
<feature type="short sequence motif" description="Tyrosine-type lysosomal sorting signal" evidence="2 4">
    <location>
        <begin position="6"/>
        <end position="10"/>
    </location>
</feature>
<feature type="modified residue" description="Phosphoserine" evidence="14">
    <location>
        <position position="28"/>
    </location>
</feature>
<feature type="splice variant" id="VSP_054648" description="In isoform 5." evidence="7">
    <original>MLGRSGYRALPLGDFDRFQQSSFGFLGSQKGCLSPERGGVGTGA</original>
    <variation>MP</variation>
    <location>
        <begin position="1"/>
        <end position="44"/>
    </location>
</feature>
<feature type="splice variant" id="VSP_012654" description="In isoform 2 and isoform 4." evidence="7 9 10">
    <location>
        <begin position="80"/>
        <end position="129"/>
    </location>
</feature>
<feature type="splice variant" id="VSP_054649" description="In isoform 3, isoform 4, isoform 5 and isoform 6." evidence="7 8 9 11">
    <location>
        <position position="264"/>
    </location>
</feature>
<feature type="splice variant" id="VSP_054650" description="In isoform 6." evidence="11">
    <location>
        <begin position="265"/>
        <end position="334"/>
    </location>
</feature>
<feature type="mutagenesis site" description="Plasma membrane localization." evidence="4">
    <original>Y</original>
    <variation>A</variation>
    <location>
        <position position="7"/>
    </location>
</feature>
<feature type="mutagenesis site" description="Plasma membrane localization." evidence="4">
    <original>L</original>
    <variation>S</variation>
    <location>
        <position position="10"/>
    </location>
</feature>
<feature type="sequence conflict" description="In Ref. 5; CAG46886." evidence="12" ref="5">
    <original>W</original>
    <variation>G</variation>
    <location>
        <position position="50"/>
    </location>
</feature>
<feature type="sequence conflict" description="In Ref. 3; AAL39002." evidence="12" ref="3">
    <original>V</original>
    <variation>L</variation>
    <location>
        <position position="222"/>
    </location>
</feature>
<feature type="sequence conflict" description="In Ref. 5; CAG46886." evidence="12" ref="5">
    <original>A</original>
    <variation>T</variation>
    <location>
        <position position="291"/>
    </location>
</feature>
<feature type="sequence conflict" description="In Ref. 1; CAA76271." evidence="12" ref="1">
    <original>P</original>
    <variation>R</variation>
    <location>
        <position position="369"/>
    </location>
</feature>
<dbReference type="EMBL" id="Y16522">
    <property type="protein sequence ID" value="CAA76271.1"/>
    <property type="status" value="ALT_FRAME"/>
    <property type="molecule type" value="mRNA"/>
</dbReference>
<dbReference type="EMBL" id="AF156564">
    <property type="protein sequence ID" value="AAF23080.1"/>
    <property type="molecule type" value="Genomic_DNA"/>
</dbReference>
<dbReference type="EMBL" id="AF156558">
    <property type="protein sequence ID" value="AAF23080.1"/>
    <property type="status" value="JOINED"/>
    <property type="molecule type" value="Genomic_DNA"/>
</dbReference>
<dbReference type="EMBL" id="AF156560">
    <property type="protein sequence ID" value="AAF23080.1"/>
    <property type="status" value="JOINED"/>
    <property type="molecule type" value="Genomic_DNA"/>
</dbReference>
<dbReference type="EMBL" id="AF156559">
    <property type="protein sequence ID" value="AAF23080.1"/>
    <property type="status" value="JOINED"/>
    <property type="molecule type" value="Genomic_DNA"/>
</dbReference>
<dbReference type="EMBL" id="AF156563">
    <property type="protein sequence ID" value="AAF23080.1"/>
    <property type="status" value="JOINED"/>
    <property type="molecule type" value="Genomic_DNA"/>
</dbReference>
<dbReference type="EMBL" id="AF156562">
    <property type="protein sequence ID" value="AAF23080.1"/>
    <property type="status" value="JOINED"/>
    <property type="molecule type" value="Genomic_DNA"/>
</dbReference>
<dbReference type="EMBL" id="AF156561">
    <property type="protein sequence ID" value="AAF23080.1"/>
    <property type="status" value="JOINED"/>
    <property type="molecule type" value="Genomic_DNA"/>
</dbReference>
<dbReference type="EMBL" id="AF156557">
    <property type="protein sequence ID" value="AAF06960.1"/>
    <property type="molecule type" value="mRNA"/>
</dbReference>
<dbReference type="EMBL" id="AF111800">
    <property type="protein sequence ID" value="AAL39002.1"/>
    <property type="molecule type" value="mRNA"/>
</dbReference>
<dbReference type="EMBL" id="DQ064605">
    <property type="protein sequence ID" value="AAY68393.1"/>
    <property type="molecule type" value="mRNA"/>
</dbReference>
<dbReference type="EMBL" id="CR542089">
    <property type="protein sequence ID" value="CAG46886.1"/>
    <property type="molecule type" value="mRNA"/>
</dbReference>
<dbReference type="EMBL" id="AK300799">
    <property type="protein sequence ID" value="BAG62457.1"/>
    <property type="molecule type" value="mRNA"/>
</dbReference>
<dbReference type="EMBL" id="AK302051">
    <property type="protein sequence ID" value="BAG63441.1"/>
    <property type="molecule type" value="mRNA"/>
</dbReference>
<dbReference type="EMBL" id="AK075244">
    <property type="protein sequence ID" value="BAG52092.1"/>
    <property type="molecule type" value="mRNA"/>
</dbReference>
<dbReference type="EMBL" id="AC108137">
    <property type="status" value="NOT_ANNOTATED_CDS"/>
    <property type="molecule type" value="Genomic_DNA"/>
</dbReference>
<dbReference type="EMBL" id="CH471082">
    <property type="protein sequence ID" value="EAW77940.1"/>
    <property type="molecule type" value="Genomic_DNA"/>
</dbReference>
<dbReference type="EMBL" id="CH471082">
    <property type="protein sequence ID" value="EAW77944.1"/>
    <property type="molecule type" value="Genomic_DNA"/>
</dbReference>
<dbReference type="EMBL" id="BC034379">
    <property type="protein sequence ID" value="AAH34379.1"/>
    <property type="molecule type" value="mRNA"/>
</dbReference>
<dbReference type="EMBL" id="BC065249">
    <property type="protein sequence ID" value="AAH65249.1"/>
    <property type="molecule type" value="mRNA"/>
</dbReference>
<dbReference type="EMBL" id="AF074953">
    <property type="protein sequence ID" value="AAD42031.1"/>
    <property type="status" value="ALT_FRAME"/>
    <property type="molecule type" value="mRNA"/>
</dbReference>
<dbReference type="EMBL" id="AL109664">
    <property type="protein sequence ID" value="CAB52015.1"/>
    <property type="molecule type" value="mRNA"/>
</dbReference>
<dbReference type="EMBL" id="AL109665">
    <property type="protein sequence ID" value="CAB52016.1"/>
    <property type="molecule type" value="mRNA"/>
</dbReference>
<dbReference type="CCDS" id="CCDS10254.1">
    <molecule id="Q9UBI4-1"/>
</dbReference>
<dbReference type="CCDS" id="CCDS58382.1">
    <molecule id="Q9UBI4-5"/>
</dbReference>
<dbReference type="CCDS" id="CCDS58383.1">
    <molecule id="Q9UBI4-4"/>
</dbReference>
<dbReference type="CCDS" id="CCDS58384.1">
    <molecule id="Q9UBI4-2"/>
</dbReference>
<dbReference type="CCDS" id="CCDS58385.1">
    <molecule id="Q9UBI4-6"/>
</dbReference>
<dbReference type="RefSeq" id="NP_001243601.1">
    <molecule id="Q9UBI4-3"/>
    <property type="nucleotide sequence ID" value="NM_001256672.2"/>
</dbReference>
<dbReference type="RefSeq" id="NP_001243602.1">
    <molecule id="Q9UBI4-2"/>
    <property type="nucleotide sequence ID" value="NM_001256673.1"/>
</dbReference>
<dbReference type="RefSeq" id="NP_001243603.1">
    <molecule id="Q9UBI4-4"/>
    <property type="nucleotide sequence ID" value="NM_001256674.2"/>
</dbReference>
<dbReference type="RefSeq" id="NP_001243604.1">
    <molecule id="Q9UBI4-6"/>
    <property type="nucleotide sequence ID" value="NM_001256675.2"/>
</dbReference>
<dbReference type="RefSeq" id="NP_001243605.1">
    <property type="nucleotide sequence ID" value="NM_001256676.1"/>
</dbReference>
<dbReference type="RefSeq" id="NP_001243606.1">
    <molecule id="Q9UBI4-5"/>
    <property type="nucleotide sequence ID" value="NM_001256677.1"/>
</dbReference>
<dbReference type="RefSeq" id="NP_004800.2">
    <molecule id="Q9UBI4-1"/>
    <property type="nucleotide sequence ID" value="NM_004809.4"/>
</dbReference>
<dbReference type="RefSeq" id="XP_006720836.1">
    <property type="nucleotide sequence ID" value="XM_006720773.3"/>
</dbReference>
<dbReference type="SMR" id="Q9UBI4"/>
<dbReference type="BioGRID" id="114796">
    <property type="interactions" value="11"/>
</dbReference>
<dbReference type="FunCoup" id="Q9UBI4">
    <property type="interactions" value="124"/>
</dbReference>
<dbReference type="IntAct" id="Q9UBI4">
    <property type="interactions" value="8"/>
</dbReference>
<dbReference type="STRING" id="9606.ENSP00000442478"/>
<dbReference type="iPTMnet" id="Q9UBI4"/>
<dbReference type="PhosphoSitePlus" id="Q9UBI4"/>
<dbReference type="SwissPalm" id="Q9UBI4"/>
<dbReference type="BioMuta" id="STOML1"/>
<dbReference type="DMDM" id="60415942"/>
<dbReference type="jPOST" id="Q9UBI4"/>
<dbReference type="MassIVE" id="Q9UBI4"/>
<dbReference type="PaxDb" id="9606-ENSP00000442478"/>
<dbReference type="PeptideAtlas" id="Q9UBI4"/>
<dbReference type="ProteomicsDB" id="17957"/>
<dbReference type="ProteomicsDB" id="42124"/>
<dbReference type="ProteomicsDB" id="5218"/>
<dbReference type="ProteomicsDB" id="83973">
    <molecule id="Q9UBI4-1"/>
</dbReference>
<dbReference type="ProteomicsDB" id="83974">
    <molecule id="Q9UBI4-2"/>
</dbReference>
<dbReference type="Antibodypedia" id="26821">
    <property type="antibodies" value="132 antibodies from 20 providers"/>
</dbReference>
<dbReference type="DNASU" id="9399"/>
<dbReference type="Ensembl" id="ENST00000316900.9">
    <molecule id="Q9UBI4-5"/>
    <property type="protein sequence ID" value="ENSP00000319323.6"/>
    <property type="gene ID" value="ENSG00000067221.14"/>
</dbReference>
<dbReference type="Ensembl" id="ENST00000316911.10">
    <molecule id="Q9UBI4-2"/>
    <property type="protein sequence ID" value="ENSP00000319384.6"/>
    <property type="gene ID" value="ENSG00000067221.14"/>
</dbReference>
<dbReference type="Ensembl" id="ENST00000359750.8">
    <molecule id="Q9UBI4-6"/>
    <property type="protein sequence ID" value="ENSP00000352788.4"/>
    <property type="gene ID" value="ENSG00000067221.14"/>
</dbReference>
<dbReference type="Ensembl" id="ENST00000541638.6">
    <molecule id="Q9UBI4-1"/>
    <property type="protein sequence ID" value="ENSP00000442478.2"/>
    <property type="gene ID" value="ENSG00000067221.14"/>
</dbReference>
<dbReference type="Ensembl" id="ENST00000564777.5">
    <molecule id="Q9UBI4-4"/>
    <property type="protein sequence ID" value="ENSP00000456343.1"/>
    <property type="gene ID" value="ENSG00000067221.14"/>
</dbReference>
<dbReference type="GeneID" id="9399"/>
<dbReference type="KEGG" id="hsa:9399"/>
<dbReference type="MANE-Select" id="ENST00000541638.6">
    <property type="protein sequence ID" value="ENSP00000442478.2"/>
    <property type="RefSeq nucleotide sequence ID" value="NM_004809.5"/>
    <property type="RefSeq protein sequence ID" value="NP_004800.2"/>
</dbReference>
<dbReference type="UCSC" id="uc002awe.5">
    <molecule id="Q9UBI4-1"/>
    <property type="organism name" value="human"/>
</dbReference>
<dbReference type="AGR" id="HGNC:14560"/>
<dbReference type="CTD" id="9399"/>
<dbReference type="DisGeNET" id="9399"/>
<dbReference type="GeneCards" id="STOML1"/>
<dbReference type="HGNC" id="HGNC:14560">
    <property type="gene designation" value="STOML1"/>
</dbReference>
<dbReference type="HPA" id="ENSG00000067221">
    <property type="expression patterns" value="Tissue enhanced (brain)"/>
</dbReference>
<dbReference type="MIM" id="608326">
    <property type="type" value="gene"/>
</dbReference>
<dbReference type="neXtProt" id="NX_Q9UBI4"/>
<dbReference type="OpenTargets" id="ENSG00000067221"/>
<dbReference type="PharmGKB" id="PA37898"/>
<dbReference type="VEuPathDB" id="HostDB:ENSG00000067221"/>
<dbReference type="eggNOG" id="KOG2621">
    <property type="taxonomic scope" value="Eukaryota"/>
</dbReference>
<dbReference type="eggNOG" id="KOG4170">
    <property type="taxonomic scope" value="Eukaryota"/>
</dbReference>
<dbReference type="GeneTree" id="ENSGT01030000234614"/>
<dbReference type="HOGENOM" id="CLU_049498_0_0_1"/>
<dbReference type="InParanoid" id="Q9UBI4"/>
<dbReference type="OMA" id="AMHFLSH"/>
<dbReference type="OrthoDB" id="3592703at2759"/>
<dbReference type="PAN-GO" id="Q9UBI4">
    <property type="GO annotations" value="1 GO annotation based on evolutionary models"/>
</dbReference>
<dbReference type="PhylomeDB" id="Q9UBI4"/>
<dbReference type="TreeFam" id="TF105750"/>
<dbReference type="PathwayCommons" id="Q9UBI4"/>
<dbReference type="SignaLink" id="Q9UBI4"/>
<dbReference type="BioGRID-ORCS" id="9399">
    <property type="hits" value="7 hits in 1161 CRISPR screens"/>
</dbReference>
<dbReference type="ChiTaRS" id="STOML1">
    <property type="organism name" value="human"/>
</dbReference>
<dbReference type="GeneWiki" id="STOML1"/>
<dbReference type="GenomeRNAi" id="9399"/>
<dbReference type="Pharos" id="Q9UBI4">
    <property type="development level" value="Tbio"/>
</dbReference>
<dbReference type="PRO" id="PR:Q9UBI4"/>
<dbReference type="Proteomes" id="UP000005640">
    <property type="component" value="Chromosome 15"/>
</dbReference>
<dbReference type="RNAct" id="Q9UBI4">
    <property type="molecule type" value="protein"/>
</dbReference>
<dbReference type="Bgee" id="ENSG00000067221">
    <property type="expression patterns" value="Expressed in pancreatic ductal cell and 199 other cell types or tissues"/>
</dbReference>
<dbReference type="ExpressionAtlas" id="Q9UBI4">
    <property type="expression patterns" value="baseline and differential"/>
</dbReference>
<dbReference type="GO" id="GO:0043231">
    <property type="term" value="C:intracellular membrane-bounded organelle"/>
    <property type="evidence" value="ECO:0000314"/>
    <property type="project" value="HPA"/>
</dbReference>
<dbReference type="GO" id="GO:0031902">
    <property type="term" value="C:late endosome membrane"/>
    <property type="evidence" value="ECO:0007669"/>
    <property type="project" value="UniProtKB-SubCell"/>
</dbReference>
<dbReference type="GO" id="GO:0045121">
    <property type="term" value="C:membrane raft"/>
    <property type="evidence" value="ECO:0007669"/>
    <property type="project" value="UniProtKB-SubCell"/>
</dbReference>
<dbReference type="GO" id="GO:0005886">
    <property type="term" value="C:plasma membrane"/>
    <property type="evidence" value="ECO:0000318"/>
    <property type="project" value="GO_Central"/>
</dbReference>
<dbReference type="GO" id="GO:0006869">
    <property type="term" value="P:lipid transport"/>
    <property type="evidence" value="ECO:0007669"/>
    <property type="project" value="UniProtKB-KW"/>
</dbReference>
<dbReference type="CDD" id="cd13436">
    <property type="entry name" value="SPFH_SLP-1"/>
    <property type="match status" value="1"/>
</dbReference>
<dbReference type="FunFam" id="3.30.479.30:FF:000011">
    <property type="entry name" value="stomatin-like protein 1 isoform X1"/>
    <property type="match status" value="1"/>
</dbReference>
<dbReference type="FunFam" id="3.30.1050.10:FF:000003">
    <property type="entry name" value="stomatin-like protein 1 isoform X2"/>
    <property type="match status" value="1"/>
</dbReference>
<dbReference type="Gene3D" id="3.30.479.30">
    <property type="entry name" value="Band 7 domain"/>
    <property type="match status" value="1"/>
</dbReference>
<dbReference type="Gene3D" id="3.30.1050.10">
    <property type="entry name" value="SCP2 sterol-binding domain"/>
    <property type="match status" value="1"/>
</dbReference>
<dbReference type="InterPro" id="IPR043202">
    <property type="entry name" value="Band-7_stomatin-like"/>
</dbReference>
<dbReference type="InterPro" id="IPR001107">
    <property type="entry name" value="Band_7"/>
</dbReference>
<dbReference type="InterPro" id="IPR036013">
    <property type="entry name" value="Band_7/SPFH_dom_sf"/>
</dbReference>
<dbReference type="InterPro" id="IPR003033">
    <property type="entry name" value="SCP2_sterol-bd_dom"/>
</dbReference>
<dbReference type="InterPro" id="IPR036527">
    <property type="entry name" value="SCP2_sterol-bd_dom_sf"/>
</dbReference>
<dbReference type="InterPro" id="IPR001972">
    <property type="entry name" value="Stomatin_HflK_fam"/>
</dbReference>
<dbReference type="PANTHER" id="PTHR10264">
    <property type="entry name" value="BAND 7 PROTEIN-RELATED"/>
    <property type="match status" value="1"/>
</dbReference>
<dbReference type="PANTHER" id="PTHR10264:SF130">
    <property type="entry name" value="STOMATIN-LIKE PROTEIN 1"/>
    <property type="match status" value="1"/>
</dbReference>
<dbReference type="Pfam" id="PF01145">
    <property type="entry name" value="Band_7"/>
    <property type="match status" value="1"/>
</dbReference>
<dbReference type="Pfam" id="PF02036">
    <property type="entry name" value="SCP2"/>
    <property type="match status" value="1"/>
</dbReference>
<dbReference type="PRINTS" id="PR00721">
    <property type="entry name" value="STOMATIN"/>
</dbReference>
<dbReference type="SMART" id="SM00244">
    <property type="entry name" value="PHB"/>
    <property type="match status" value="1"/>
</dbReference>
<dbReference type="SUPFAM" id="SSF117892">
    <property type="entry name" value="Band 7/SPFH domain"/>
    <property type="match status" value="1"/>
</dbReference>
<dbReference type="SUPFAM" id="SSF55718">
    <property type="entry name" value="SCP-like"/>
    <property type="match status" value="1"/>
</dbReference>
<evidence type="ECO:0000250" key="1">
    <source>
        <dbReference type="UniProtKB" id="Q8CI66"/>
    </source>
</evidence>
<evidence type="ECO:0000255" key="2"/>
<evidence type="ECO:0000269" key="3">
    <source>
    </source>
</evidence>
<evidence type="ECO:0000269" key="4">
    <source>
    </source>
</evidence>
<evidence type="ECO:0000269" key="5">
    <source>
    </source>
</evidence>
<evidence type="ECO:0000269" key="6">
    <source>
    </source>
</evidence>
<evidence type="ECO:0000303" key="7">
    <source>
    </source>
</evidence>
<evidence type="ECO:0000303" key="8">
    <source ref="11"/>
</evidence>
<evidence type="ECO:0000303" key="9">
    <source ref="12"/>
</evidence>
<evidence type="ECO:0000303" key="10">
    <source ref="3"/>
</evidence>
<evidence type="ECO:0000303" key="11">
    <source ref="4"/>
</evidence>
<evidence type="ECO:0000305" key="12"/>
<evidence type="ECO:0000305" key="13">
    <source>
    </source>
</evidence>
<evidence type="ECO:0007744" key="14">
    <source>
    </source>
</evidence>
<accession>Q9UBI4</accession>
<accession>B3KQN0</accession>
<accession>B4DUU5</accession>
<accession>B4DXM9</accession>
<accession>E7ESC0</accession>
<accession>H3BRP3</accession>
<accession>O95675</accession>
<accession>Q4PNR4</accession>
<accession>Q6FGL8</accession>
<accession>Q8WYI7</accession>
<accession>Q9UMB9</accession>
<accession>Q9UMC0</accession>
<accession>Q9Y6H9</accession>
<gene>
    <name type="primary">STOML1</name>
    <name type="synonym">SLP1</name>
    <name type="synonym">UNC24</name>
    <name type="ORF">MSTP019</name>
</gene>
<proteinExistence type="evidence at protein level"/>
<protein>
    <recommendedName>
        <fullName>Stomatin-like protein 1</fullName>
        <shortName>SLP-1</shortName>
    </recommendedName>
    <alternativeName>
        <fullName>EPB72-like protein 1</fullName>
    </alternativeName>
    <alternativeName>
        <fullName>Protein unc-24 homolog</fullName>
    </alternativeName>
    <alternativeName>
        <fullName>Stomatin-related protein</fullName>
        <shortName>STORP</shortName>
    </alternativeName>
</protein>
<organism>
    <name type="scientific">Homo sapiens</name>
    <name type="common">Human</name>
    <dbReference type="NCBI Taxonomy" id="9606"/>
    <lineage>
        <taxon>Eukaryota</taxon>
        <taxon>Metazoa</taxon>
        <taxon>Chordata</taxon>
        <taxon>Craniata</taxon>
        <taxon>Vertebrata</taxon>
        <taxon>Euteleostomi</taxon>
        <taxon>Mammalia</taxon>
        <taxon>Eutheria</taxon>
        <taxon>Euarchontoglires</taxon>
        <taxon>Primates</taxon>
        <taxon>Haplorrhini</taxon>
        <taxon>Catarrhini</taxon>
        <taxon>Hominidae</taxon>
        <taxon>Homo</taxon>
    </lineage>
</organism>
<reference key="1">
    <citation type="journal article" date="1998" name="Gene">
        <title>Molecular cloning of hSLP-1, a novel human brain-specific member of the band 7/MEC-2 family similar to Caenorhabditis elegans UNC-24.</title>
        <authorList>
            <person name="Seidel G."/>
            <person name="Prohaska R."/>
        </authorList>
    </citation>
    <scope>NUCLEOTIDE SEQUENCE [MRNA] (ISOFORM 1)</scope>
    <scope>TISSUE SPECIFICITY</scope>
    <source>
        <tissue>Brain cortex</tissue>
    </source>
</reference>
<reference key="2">
    <citation type="journal article" date="2000" name="Eur. J. Haematol.">
        <title>A novel gene STORP (STOmatin-Related Protein) is localized 2 kb upstream of the promyelocytic gene on chromosome 15q22.</title>
        <authorList>
            <person name="Gilles F."/>
            <person name="Glenn M."/>
            <person name="Goy A."/>
            <person name="Remache Y."/>
            <person name="Zelenetz A.D."/>
        </authorList>
    </citation>
    <scope>NUCLEOTIDE SEQUENCE [GENOMIC DNA / MRNA] (ISOFORM 1)</scope>
    <scope>TISSUE SPECIFICITY</scope>
    <source>
        <tissue>Fetal liver</tissue>
    </source>
</reference>
<reference key="3">
    <citation type="submission" date="1998-12" db="EMBL/GenBank/DDBJ databases">
        <authorList>
            <person name="Xu Y.Y."/>
            <person name="Sun L.Z."/>
            <person name="Wu Q.Y."/>
            <person name="Liu Y.Q."/>
            <person name="Liu B."/>
            <person name="Zhao B."/>
            <person name="Wang X.Y."/>
            <person name="Song L."/>
            <person name="Ye J."/>
            <person name="Sheng H."/>
            <person name="Gao Y."/>
            <person name="Zhang C.L."/>
            <person name="Zhang J.-W."/>
            <person name="Wei Y.J."/>
            <person name="Sun Y.H."/>
            <person name="Jiang Y.X."/>
            <person name="Zhao X.W."/>
            <person name="Liu S."/>
            <person name="Liu L.S."/>
            <person name="Ding J.F."/>
            <person name="Gao R.L."/>
            <person name="Qiang B.Q."/>
            <person name="Yuan J.G."/>
            <person name="Liew C.C."/>
            <person name="Zhao M.S."/>
            <person name="Hui R.T."/>
        </authorList>
    </citation>
    <scope>NUCLEOTIDE SEQUENCE [LARGE SCALE MRNA] (ISOFORM 2)</scope>
    <source>
        <tissue>Aorta</tissue>
    </source>
</reference>
<reference key="4">
    <citation type="submission" date="2005-05" db="EMBL/GenBank/DDBJ databases">
        <authorList>
            <person name="Li H."/>
            <person name="Nong W."/>
            <person name="Zhou G."/>
            <person name="Ke R."/>
            <person name="Shen C."/>
            <person name="Zhong G."/>
            <person name="Zheng Z."/>
            <person name="Liang M."/>
            <person name="Wen S."/>
            <person name="Lin L."/>
            <person name="Yang S."/>
        </authorList>
    </citation>
    <scope>NUCLEOTIDE SEQUENCE [MRNA] (ISOFORM 6)</scope>
</reference>
<reference key="5">
    <citation type="submission" date="2004-06" db="EMBL/GenBank/DDBJ databases">
        <title>Cloning of human full open reading frames in Gateway(TM) system entry vector (pDONR201).</title>
        <authorList>
            <person name="Ebert L."/>
            <person name="Schick M."/>
            <person name="Neubert P."/>
            <person name="Schatten R."/>
            <person name="Henze S."/>
            <person name="Korn B."/>
        </authorList>
    </citation>
    <scope>NUCLEOTIDE SEQUENCE [LARGE SCALE MRNA] (ISOFORM 1)</scope>
</reference>
<reference key="6">
    <citation type="journal article" date="2004" name="Nat. Genet.">
        <title>Complete sequencing and characterization of 21,243 full-length human cDNAs.</title>
        <authorList>
            <person name="Ota T."/>
            <person name="Suzuki Y."/>
            <person name="Nishikawa T."/>
            <person name="Otsuki T."/>
            <person name="Sugiyama T."/>
            <person name="Irie R."/>
            <person name="Wakamatsu A."/>
            <person name="Hayashi K."/>
            <person name="Sato H."/>
            <person name="Nagai K."/>
            <person name="Kimura K."/>
            <person name="Makita H."/>
            <person name="Sekine M."/>
            <person name="Obayashi M."/>
            <person name="Nishi T."/>
            <person name="Shibahara T."/>
            <person name="Tanaka T."/>
            <person name="Ishii S."/>
            <person name="Yamamoto J."/>
            <person name="Saito K."/>
            <person name="Kawai Y."/>
            <person name="Isono Y."/>
            <person name="Nakamura Y."/>
            <person name="Nagahari K."/>
            <person name="Murakami K."/>
            <person name="Yasuda T."/>
            <person name="Iwayanagi T."/>
            <person name="Wagatsuma M."/>
            <person name="Shiratori A."/>
            <person name="Sudo H."/>
            <person name="Hosoiri T."/>
            <person name="Kaku Y."/>
            <person name="Kodaira H."/>
            <person name="Kondo H."/>
            <person name="Sugawara M."/>
            <person name="Takahashi M."/>
            <person name="Kanda K."/>
            <person name="Yokoi T."/>
            <person name="Furuya T."/>
            <person name="Kikkawa E."/>
            <person name="Omura Y."/>
            <person name="Abe K."/>
            <person name="Kamihara K."/>
            <person name="Katsuta N."/>
            <person name="Sato K."/>
            <person name="Tanikawa M."/>
            <person name="Yamazaki M."/>
            <person name="Ninomiya K."/>
            <person name="Ishibashi T."/>
            <person name="Yamashita H."/>
            <person name="Murakawa K."/>
            <person name="Fujimori K."/>
            <person name="Tanai H."/>
            <person name="Kimata M."/>
            <person name="Watanabe M."/>
            <person name="Hiraoka S."/>
            <person name="Chiba Y."/>
            <person name="Ishida S."/>
            <person name="Ono Y."/>
            <person name="Takiguchi S."/>
            <person name="Watanabe S."/>
            <person name="Yosida M."/>
            <person name="Hotuta T."/>
            <person name="Kusano J."/>
            <person name="Kanehori K."/>
            <person name="Takahashi-Fujii A."/>
            <person name="Hara H."/>
            <person name="Tanase T.-O."/>
            <person name="Nomura Y."/>
            <person name="Togiya S."/>
            <person name="Komai F."/>
            <person name="Hara R."/>
            <person name="Takeuchi K."/>
            <person name="Arita M."/>
            <person name="Imose N."/>
            <person name="Musashino K."/>
            <person name="Yuuki H."/>
            <person name="Oshima A."/>
            <person name="Sasaki N."/>
            <person name="Aotsuka S."/>
            <person name="Yoshikawa Y."/>
            <person name="Matsunawa H."/>
            <person name="Ichihara T."/>
            <person name="Shiohata N."/>
            <person name="Sano S."/>
            <person name="Moriya S."/>
            <person name="Momiyama H."/>
            <person name="Satoh N."/>
            <person name="Takami S."/>
            <person name="Terashima Y."/>
            <person name="Suzuki O."/>
            <person name="Nakagawa S."/>
            <person name="Senoh A."/>
            <person name="Mizoguchi H."/>
            <person name="Goto Y."/>
            <person name="Shimizu F."/>
            <person name="Wakebe H."/>
            <person name="Hishigaki H."/>
            <person name="Watanabe T."/>
            <person name="Sugiyama A."/>
            <person name="Takemoto M."/>
            <person name="Kawakami B."/>
            <person name="Yamazaki M."/>
            <person name="Watanabe K."/>
            <person name="Kumagai A."/>
            <person name="Itakura S."/>
            <person name="Fukuzumi Y."/>
            <person name="Fujimori Y."/>
            <person name="Komiyama M."/>
            <person name="Tashiro H."/>
            <person name="Tanigami A."/>
            <person name="Fujiwara T."/>
            <person name="Ono T."/>
            <person name="Yamada K."/>
            <person name="Fujii Y."/>
            <person name="Ozaki K."/>
            <person name="Hirao M."/>
            <person name="Ohmori Y."/>
            <person name="Kawabata A."/>
            <person name="Hikiji T."/>
            <person name="Kobatake N."/>
            <person name="Inagaki H."/>
            <person name="Ikema Y."/>
            <person name="Okamoto S."/>
            <person name="Okitani R."/>
            <person name="Kawakami T."/>
            <person name="Noguchi S."/>
            <person name="Itoh T."/>
            <person name="Shigeta K."/>
            <person name="Senba T."/>
            <person name="Matsumura K."/>
            <person name="Nakajima Y."/>
            <person name="Mizuno T."/>
            <person name="Morinaga M."/>
            <person name="Sasaki M."/>
            <person name="Togashi T."/>
            <person name="Oyama M."/>
            <person name="Hata H."/>
            <person name="Watanabe M."/>
            <person name="Komatsu T."/>
            <person name="Mizushima-Sugano J."/>
            <person name="Satoh T."/>
            <person name="Shirai Y."/>
            <person name="Takahashi Y."/>
            <person name="Nakagawa K."/>
            <person name="Okumura K."/>
            <person name="Nagase T."/>
            <person name="Nomura N."/>
            <person name="Kikuchi H."/>
            <person name="Masuho Y."/>
            <person name="Yamashita R."/>
            <person name="Nakai K."/>
            <person name="Yada T."/>
            <person name="Nakamura Y."/>
            <person name="Ohara O."/>
            <person name="Isogai T."/>
            <person name="Sugano S."/>
        </authorList>
    </citation>
    <scope>NUCLEOTIDE SEQUENCE [LARGE SCALE MRNA] (ISOFORMS 2 AND 5)</scope>
    <source>
        <tissue>Testis</tissue>
    </source>
</reference>
<reference key="7">
    <citation type="journal article" date="2006" name="Nature">
        <title>Analysis of the DNA sequence and duplication history of human chromosome 15.</title>
        <authorList>
            <person name="Zody M.C."/>
            <person name="Garber M."/>
            <person name="Sharpe T."/>
            <person name="Young S.K."/>
            <person name="Rowen L."/>
            <person name="O'Neill K."/>
            <person name="Whittaker C.A."/>
            <person name="Kamal M."/>
            <person name="Chang J.L."/>
            <person name="Cuomo C.A."/>
            <person name="Dewar K."/>
            <person name="FitzGerald M.G."/>
            <person name="Kodira C.D."/>
            <person name="Madan A."/>
            <person name="Qin S."/>
            <person name="Yang X."/>
            <person name="Abbasi N."/>
            <person name="Abouelleil A."/>
            <person name="Arachchi H.M."/>
            <person name="Baradarani L."/>
            <person name="Birditt B."/>
            <person name="Bloom S."/>
            <person name="Bloom T."/>
            <person name="Borowsky M.L."/>
            <person name="Burke J."/>
            <person name="Butler J."/>
            <person name="Cook A."/>
            <person name="DeArellano K."/>
            <person name="DeCaprio D."/>
            <person name="Dorris L. III"/>
            <person name="Dors M."/>
            <person name="Eichler E.E."/>
            <person name="Engels R."/>
            <person name="Fahey J."/>
            <person name="Fleetwood P."/>
            <person name="Friedman C."/>
            <person name="Gearin G."/>
            <person name="Hall J.L."/>
            <person name="Hensley G."/>
            <person name="Johnson E."/>
            <person name="Jones C."/>
            <person name="Kamat A."/>
            <person name="Kaur A."/>
            <person name="Locke D.P."/>
            <person name="Madan A."/>
            <person name="Munson G."/>
            <person name="Jaffe D.B."/>
            <person name="Lui A."/>
            <person name="Macdonald P."/>
            <person name="Mauceli E."/>
            <person name="Naylor J.W."/>
            <person name="Nesbitt R."/>
            <person name="Nicol R."/>
            <person name="O'Leary S.B."/>
            <person name="Ratcliffe A."/>
            <person name="Rounsley S."/>
            <person name="She X."/>
            <person name="Sneddon K.M.B."/>
            <person name="Stewart S."/>
            <person name="Sougnez C."/>
            <person name="Stone S.M."/>
            <person name="Topham K."/>
            <person name="Vincent D."/>
            <person name="Wang S."/>
            <person name="Zimmer A.R."/>
            <person name="Birren B.W."/>
            <person name="Hood L."/>
            <person name="Lander E.S."/>
            <person name="Nusbaum C."/>
        </authorList>
    </citation>
    <scope>NUCLEOTIDE SEQUENCE [LARGE SCALE GENOMIC DNA]</scope>
</reference>
<reference key="8">
    <citation type="journal article" date="2005" name="DNA Res.">
        <title>Signal sequence and keyword trap in silico for selection of full-length human cDNAs encoding secretion or membrane proteins from oligo-capped cDNA libraries.</title>
        <authorList>
            <person name="Otsuki T."/>
            <person name="Ota T."/>
            <person name="Nishikawa T."/>
            <person name="Hayashi K."/>
            <person name="Suzuki Y."/>
            <person name="Yamamoto J."/>
            <person name="Wakamatsu A."/>
            <person name="Kimura K."/>
            <person name="Sakamoto K."/>
            <person name="Hatano N."/>
            <person name="Kawai Y."/>
            <person name="Ishii S."/>
            <person name="Saito K."/>
            <person name="Kojima S."/>
            <person name="Sugiyama T."/>
            <person name="Ono T."/>
            <person name="Okano K."/>
            <person name="Yoshikawa Y."/>
            <person name="Aotsuka S."/>
            <person name="Sasaki N."/>
            <person name="Hattori A."/>
            <person name="Okumura K."/>
            <person name="Nagai K."/>
            <person name="Sugano S."/>
            <person name="Isogai T."/>
        </authorList>
    </citation>
    <scope>NUCLEOTIDE SEQUENCE [LARGE SCALE MRNA] (ISOFORM 1)</scope>
    <source>
        <tissue>Thyroid</tissue>
    </source>
</reference>
<reference key="9">
    <citation type="submission" date="2005-07" db="EMBL/GenBank/DDBJ databases">
        <authorList>
            <person name="Mural R.J."/>
            <person name="Istrail S."/>
            <person name="Sutton G.G."/>
            <person name="Florea L."/>
            <person name="Halpern A.L."/>
            <person name="Mobarry C.M."/>
            <person name="Lippert R."/>
            <person name="Walenz B."/>
            <person name="Shatkay H."/>
            <person name="Dew I."/>
            <person name="Miller J.R."/>
            <person name="Flanigan M.J."/>
            <person name="Edwards N.J."/>
            <person name="Bolanos R."/>
            <person name="Fasulo D."/>
            <person name="Halldorsson B.V."/>
            <person name="Hannenhalli S."/>
            <person name="Turner R."/>
            <person name="Yooseph S."/>
            <person name="Lu F."/>
            <person name="Nusskern D.R."/>
            <person name="Shue B.C."/>
            <person name="Zheng X.H."/>
            <person name="Zhong F."/>
            <person name="Delcher A.L."/>
            <person name="Huson D.H."/>
            <person name="Kravitz S.A."/>
            <person name="Mouchard L."/>
            <person name="Reinert K."/>
            <person name="Remington K.A."/>
            <person name="Clark A.G."/>
            <person name="Waterman M.S."/>
            <person name="Eichler E.E."/>
            <person name="Adams M.D."/>
            <person name="Hunkapiller M.W."/>
            <person name="Myers E.W."/>
            <person name="Venter J.C."/>
        </authorList>
    </citation>
    <scope>NUCLEOTIDE SEQUENCE [LARGE SCALE GENOMIC DNA]</scope>
</reference>
<reference key="10">
    <citation type="journal article" date="2004" name="Genome Res.">
        <title>The status, quality, and expansion of the NIH full-length cDNA project: the Mammalian Gene Collection (MGC).</title>
        <authorList>
            <consortium name="The MGC Project Team"/>
        </authorList>
    </citation>
    <scope>NUCLEOTIDE SEQUENCE [LARGE SCALE MRNA] (ISOFORM 1)</scope>
    <source>
        <tissue>Colon</tissue>
        <tissue>Lung</tissue>
    </source>
</reference>
<reference key="11">
    <citation type="submission" date="1998-06" db="EMBL/GenBank/DDBJ databases">
        <title>UNC-24/hunc-24 implicates stomatin and stomatin-like proteins in the function of the lipid bilayer.</title>
        <authorList>
            <person name="Barnes T.M."/>
            <person name="Benard C."/>
            <person name="Hekimi S."/>
        </authorList>
    </citation>
    <scope>NUCLEOTIDE SEQUENCE [MRNA] OF 8-398 (ISOFORM 3)</scope>
</reference>
<reference key="12">
    <citation type="submission" date="1999-08" db="EMBL/GenBank/DDBJ databases">
        <authorList>
            <consortium name="The European IMAGE consortium"/>
        </authorList>
    </citation>
    <scope>NUCLEOTIDE SEQUENCE [LARGE SCALE MRNA] OF 8-398 (ISOFORM 4)</scope>
</reference>
<reference key="13">
    <citation type="journal article" date="2009" name="J. Biol. Chem.">
        <title>Stomatin-like protein-1 interacts with stomatin and is targeted to late endosomes.</title>
        <authorList>
            <person name="Mairhofer M."/>
            <person name="Steiner M."/>
            <person name="Salzer U."/>
            <person name="Prohaska R."/>
        </authorList>
    </citation>
    <scope>SUBCELLULAR LOCATION</scope>
    <scope>FUNCTION</scope>
    <scope>INTERACTION WITH STOM</scope>
    <scope>MUTAGENESIS OF TYR-7 AND LEU-10</scope>
</reference>
<reference key="14">
    <citation type="journal article" date="2012" name="PLoS ONE">
        <title>The stomatin-like protein SLP-1 and Cdk2 interact with the F-Box protein Fbw7-gamma.</title>
        <authorList>
            <person name="Zhang W."/>
            <person name="MacDonald E.M."/>
            <person name="Koepp D.M."/>
        </authorList>
    </citation>
    <scope>INTERACTION WITH FBXW7 AND CDK2</scope>
    <scope>FUNCTION</scope>
</reference>
<reference key="15">
    <citation type="journal article" date="2013" name="J. Proteome Res.">
        <title>Toward a comprehensive characterization of a human cancer cell phosphoproteome.</title>
        <authorList>
            <person name="Zhou H."/>
            <person name="Di Palma S."/>
            <person name="Preisinger C."/>
            <person name="Peng M."/>
            <person name="Polat A.N."/>
            <person name="Heck A.J."/>
            <person name="Mohammed S."/>
        </authorList>
    </citation>
    <scope>PHOSPHORYLATION [LARGE SCALE ANALYSIS] AT SER-28</scope>
    <scope>IDENTIFICATION BY MASS SPECTROMETRY [LARGE SCALE ANALYSIS]</scope>
    <source>
        <tissue>Erythroleukemia</tissue>
    </source>
</reference>
<name>STML1_HUMAN</name>
<comment type="function">
    <text evidence="1 4 13">May play a role in cholesterol transfer to late endosomes (PubMed:19696025). May play a role in modulating membrane acid-sensing ion channels. Can specifically inhibit proton-gated current of ASIC1 isoform 1. Can increase inactivation speed of ASIC3. May be involved in regulation of proton sensing in dorsal root ganglions (By similarity). May play a role in protecting FBXW7 isoform 3 from degradation (PubMed:23082202).</text>
</comment>
<comment type="subunit">
    <text evidence="4 5">Interacts with STOM; may redistribute STOM from the plasma membrane to late endosomes (PubMed:19696025). Interacts with FBXW7 isoform 3 and CDK2 (PubMed:23082202).</text>
</comment>
<comment type="interaction">
    <interactant intactId="EBI-2681162">
        <id>Q9UBI4</id>
    </interactant>
    <interactant intactId="EBI-375096">
        <id>P24941</id>
        <label>CDK2</label>
    </interactant>
    <organismsDiffer>false</organismsDiffer>
    <experiments>2</experiments>
</comment>
<comment type="interaction">
    <interactant intactId="EBI-2681162">
        <id>Q9UBI4</id>
    </interactant>
    <interactant intactId="EBI-6502391">
        <id>Q969H0-4</id>
        <label>FBXW7</label>
    </interactant>
    <organismsDiffer>false</organismsDiffer>
    <experiments>3</experiments>
</comment>
<comment type="interaction">
    <interactant intactId="EBI-2681162">
        <id>Q9UBI4</id>
    </interactant>
    <interactant intactId="EBI-1211440">
        <id>P27105</id>
        <label>STOM</label>
    </interactant>
    <organismsDiffer>false</organismsDiffer>
    <experiments>4</experiments>
</comment>
<comment type="subcellular location">
    <subcellularLocation>
        <location evidence="12">Membrane</location>
        <topology evidence="12">Single-pass type III membrane protein</topology>
    </subcellularLocation>
    <subcellularLocation>
        <location evidence="4">Late endosome membrane</location>
    </subcellularLocation>
    <subcellularLocation>
        <location evidence="4">Membrane raft</location>
    </subcellularLocation>
    <subcellularLocation>
        <location evidence="1">Cell membrane</location>
        <topology>Single-pass type III membrane protein</topology>
    </subcellularLocation>
    <subcellularLocation>
        <location evidence="1">Cytoplasmic vesicle</location>
    </subcellularLocation>
</comment>
<comment type="alternative products">
    <event type="alternative splicing"/>
    <isoform>
        <id>Q9UBI4-1</id>
        <name>1</name>
        <sequence type="displayed"/>
    </isoform>
    <isoform>
        <id>Q9UBI4-2</id>
        <name>2</name>
        <sequence type="described" ref="VSP_012654"/>
    </isoform>
    <isoform>
        <id>Q9UBI4-3</id>
        <name>3</name>
        <sequence type="described" ref="VSP_054649"/>
    </isoform>
    <isoform>
        <id>Q9UBI4-4</id>
        <name>4</name>
        <sequence type="described" ref="VSP_012654 VSP_054649"/>
    </isoform>
    <isoform>
        <id>Q9UBI4-5</id>
        <name>5</name>
        <sequence type="described" ref="VSP_054648 VSP_054649"/>
    </isoform>
    <isoform>
        <id>Q9UBI4-6</id>
        <name>6</name>
        <sequence type="described" ref="VSP_054649 VSP_054650"/>
    </isoform>
</comment>
<comment type="tissue specificity">
    <text evidence="3 6">Ubiquitously expressed at low levels. Expression is highest in brain.</text>
</comment>
<comment type="similarity">
    <text evidence="12">Belongs to the band 7/mec-2 family.</text>
</comment>
<comment type="sequence caution" evidence="12">
    <conflict type="frameshift">
        <sequence resource="EMBL-CDS" id="AAD42031"/>
    </conflict>
</comment>
<comment type="sequence caution" evidence="12">
    <conflict type="frameshift">
        <sequence resource="EMBL-CDS" id="CAA76271"/>
    </conflict>
</comment>